<dbReference type="EMBL" id="AE005674">
    <property type="protein sequence ID" value="AAN44744.1"/>
    <property type="molecule type" value="Genomic_DNA"/>
</dbReference>
<dbReference type="EMBL" id="AE014073">
    <property type="protein sequence ID" value="AAP18554.1"/>
    <property type="molecule type" value="Genomic_DNA"/>
</dbReference>
<dbReference type="RefSeq" id="WP_000510962.1">
    <property type="nucleotide sequence ID" value="NZ_WPGW01000026.1"/>
</dbReference>
<dbReference type="SMR" id="Q83JE2"/>
<dbReference type="STRING" id="198214.SF3280"/>
<dbReference type="PaxDb" id="198214-SF3280"/>
<dbReference type="GeneID" id="75206090"/>
<dbReference type="KEGG" id="sfl:SF3280"/>
<dbReference type="KEGG" id="sfx:S3495"/>
<dbReference type="PATRIC" id="fig|198214.7.peg.3886"/>
<dbReference type="HOGENOM" id="CLU_027647_0_0_6"/>
<dbReference type="Proteomes" id="UP000001006">
    <property type="component" value="Chromosome"/>
</dbReference>
<dbReference type="Proteomes" id="UP000002673">
    <property type="component" value="Chromosome"/>
</dbReference>
<dbReference type="GO" id="GO:0005886">
    <property type="term" value="C:plasma membrane"/>
    <property type="evidence" value="ECO:0007669"/>
    <property type="project" value="UniProtKB-SubCell"/>
</dbReference>
<dbReference type="GO" id="GO:0022857">
    <property type="term" value="F:transmembrane transporter activity"/>
    <property type="evidence" value="ECO:0007669"/>
    <property type="project" value="UniProtKB-UniRule"/>
</dbReference>
<dbReference type="GO" id="GO:0046942">
    <property type="term" value="P:carboxylic acid transport"/>
    <property type="evidence" value="ECO:0007669"/>
    <property type="project" value="InterPro"/>
</dbReference>
<dbReference type="HAMAP" id="MF_01545">
    <property type="entry name" value="AaeB"/>
    <property type="match status" value="1"/>
</dbReference>
<dbReference type="InterPro" id="IPR006726">
    <property type="entry name" value="PHBA_efflux_AaeB/fusaric-R"/>
</dbReference>
<dbReference type="InterPro" id="IPR023706">
    <property type="entry name" value="PHBA_efflux_pump_AaeB"/>
</dbReference>
<dbReference type="NCBIfam" id="NF007916">
    <property type="entry name" value="PRK10631.1"/>
    <property type="match status" value="1"/>
</dbReference>
<dbReference type="PANTHER" id="PTHR30509:SF9">
    <property type="entry name" value="MULTIDRUG RESISTANCE PROTEIN MDTO"/>
    <property type="match status" value="1"/>
</dbReference>
<dbReference type="PANTHER" id="PTHR30509">
    <property type="entry name" value="P-HYDROXYBENZOIC ACID EFFLUX PUMP SUBUNIT-RELATED"/>
    <property type="match status" value="1"/>
</dbReference>
<dbReference type="Pfam" id="PF04632">
    <property type="entry name" value="FUSC"/>
    <property type="match status" value="1"/>
</dbReference>
<sequence>MGIFSIANQHIRFAVKLATAIVLALFVGFHFQLETPRWAVLTAAIVAAGPAFAAGGEPYSGAIRYRGFLRIIGTFIGCIAGLVIIIAMIRAPLLMILVCCIWAGFCTWISSLVRIENSYAWGLAGYTALIIVITIQPEPLLTPQFAVERCSEIVIGIVCAIMADLLFSPRSIKQEVDRELESLLVAQYQLMQLCIKHGDGEVVDKAWGDLVRRTTALQGMRSNLNMESSRWARANRRLKAINTLSLTLITQSCETYLIQNTRPELITDTFREFFDTPVETAQDVHKQLKRLRRVIAWTGERETPVTIYSWVAAATRYQLLKRGVISNTKINATEEEILQGEPEVKVESAERHHAMVNFWRTTLSCILGTLFWLWTGWTSGSGAMVMIAVVTSLAMRLPNPRMVAIDFIYGTLAALPLGLLYFLVIIPNTQQSMLLLCISLAVLGFFLGIEVQKRRLGSMGALASTINIIVLDNPMTFHFSQFLDSALGQIVGCVLAFTVILLVRDKSRDRTGRVLLNQFVSAAVSAMTTNVARRKENHLPALYQQLFLLMNKFPGDLPKFRLALTMIIAHQRLRDAPIPVNEDLSAFHRQMRRTADHVISARSDDKRRRYFGQLLEELEIYQEKLRIWQAPPQVTEPVHRLAGMLHKYQHALTDS</sequence>
<evidence type="ECO:0000255" key="1"/>
<evidence type="ECO:0000255" key="2">
    <source>
        <dbReference type="HAMAP-Rule" id="MF_01545"/>
    </source>
</evidence>
<keyword id="KW-0997">Cell inner membrane</keyword>
<keyword id="KW-1003">Cell membrane</keyword>
<keyword id="KW-0472">Membrane</keyword>
<keyword id="KW-1185">Reference proteome</keyword>
<keyword id="KW-0812">Transmembrane</keyword>
<keyword id="KW-1133">Transmembrane helix</keyword>
<keyword id="KW-0813">Transport</keyword>
<feature type="chain" id="PRO_0000210085" description="p-hydroxybenzoic acid efflux pump subunit AaeB">
    <location>
        <begin position="1"/>
        <end position="655"/>
    </location>
</feature>
<feature type="topological domain" description="Periplasmic" evidence="1">
    <location>
        <begin position="1"/>
        <end position="12"/>
    </location>
</feature>
<feature type="transmembrane region" description="Helical" evidence="2">
    <location>
        <begin position="13"/>
        <end position="33"/>
    </location>
</feature>
<feature type="topological domain" description="Cytoplasmic" evidence="1">
    <location>
        <begin position="34"/>
        <end position="37"/>
    </location>
</feature>
<feature type="transmembrane region" description="Helical" evidence="2">
    <location>
        <begin position="38"/>
        <end position="58"/>
    </location>
</feature>
<feature type="topological domain" description="Periplasmic" evidence="1">
    <location>
        <begin position="59"/>
        <end position="68"/>
    </location>
</feature>
<feature type="transmembrane region" description="Helical" evidence="2">
    <location>
        <begin position="69"/>
        <end position="89"/>
    </location>
</feature>
<feature type="topological domain" description="Cytoplasmic" evidence="1">
    <location>
        <begin position="90"/>
        <end position="92"/>
    </location>
</feature>
<feature type="transmembrane region" description="Helical" evidence="2">
    <location>
        <begin position="93"/>
        <end position="113"/>
    </location>
</feature>
<feature type="topological domain" description="Periplasmic" evidence="1">
    <location>
        <begin position="114"/>
        <end position="120"/>
    </location>
</feature>
<feature type="transmembrane region" description="Helical" evidence="2">
    <location>
        <begin position="121"/>
        <end position="141"/>
    </location>
</feature>
<feature type="topological domain" description="Cytoplasmic" evidence="1">
    <location>
        <begin position="142"/>
        <end position="151"/>
    </location>
</feature>
<feature type="transmembrane region" description="Helical" evidence="2">
    <location>
        <begin position="152"/>
        <end position="172"/>
    </location>
</feature>
<feature type="topological domain" description="Periplasmic" evidence="1">
    <location>
        <begin position="173"/>
        <end position="369"/>
    </location>
</feature>
<feature type="transmembrane region" description="Helical" evidence="2">
    <location>
        <begin position="370"/>
        <end position="390"/>
    </location>
</feature>
<feature type="topological domain" description="Cytoplasmic" evidence="1">
    <location>
        <begin position="391"/>
        <end position="406"/>
    </location>
</feature>
<feature type="transmembrane region" description="Helical" evidence="2">
    <location>
        <begin position="407"/>
        <end position="427"/>
    </location>
</feature>
<feature type="topological domain" description="Periplasmic" evidence="1">
    <location>
        <begin position="428"/>
        <end position="430"/>
    </location>
</feature>
<feature type="transmembrane region" description="Helical" evidence="2">
    <location>
        <begin position="431"/>
        <end position="451"/>
    </location>
</feature>
<feature type="topological domain" description="Cytoplasmic" evidence="1">
    <location>
        <begin position="452"/>
        <end position="458"/>
    </location>
</feature>
<feature type="transmembrane region" description="Helical" evidence="2">
    <location>
        <begin position="459"/>
        <end position="479"/>
    </location>
</feature>
<feature type="topological domain" description="Periplasmic" evidence="1">
    <location>
        <begin position="480"/>
        <end position="481"/>
    </location>
</feature>
<feature type="transmembrane region" description="Helical" evidence="2">
    <location>
        <begin position="482"/>
        <end position="502"/>
    </location>
</feature>
<feature type="topological domain" description="Cytoplasmic" evidence="1">
    <location>
        <begin position="503"/>
        <end position="655"/>
    </location>
</feature>
<organism>
    <name type="scientific">Shigella flexneri</name>
    <dbReference type="NCBI Taxonomy" id="623"/>
    <lineage>
        <taxon>Bacteria</taxon>
        <taxon>Pseudomonadati</taxon>
        <taxon>Pseudomonadota</taxon>
        <taxon>Gammaproteobacteria</taxon>
        <taxon>Enterobacterales</taxon>
        <taxon>Enterobacteriaceae</taxon>
        <taxon>Shigella</taxon>
    </lineage>
</organism>
<reference key="1">
    <citation type="journal article" date="2002" name="Nucleic Acids Res.">
        <title>Genome sequence of Shigella flexneri 2a: insights into pathogenicity through comparison with genomes of Escherichia coli K12 and O157.</title>
        <authorList>
            <person name="Jin Q."/>
            <person name="Yuan Z."/>
            <person name="Xu J."/>
            <person name="Wang Y."/>
            <person name="Shen Y."/>
            <person name="Lu W."/>
            <person name="Wang J."/>
            <person name="Liu H."/>
            <person name="Yang J."/>
            <person name="Yang F."/>
            <person name="Zhang X."/>
            <person name="Zhang J."/>
            <person name="Yang G."/>
            <person name="Wu H."/>
            <person name="Qu D."/>
            <person name="Dong J."/>
            <person name="Sun L."/>
            <person name="Xue Y."/>
            <person name="Zhao A."/>
            <person name="Gao Y."/>
            <person name="Zhu J."/>
            <person name="Kan B."/>
            <person name="Ding K."/>
            <person name="Chen S."/>
            <person name="Cheng H."/>
            <person name="Yao Z."/>
            <person name="He B."/>
            <person name="Chen R."/>
            <person name="Ma D."/>
            <person name="Qiang B."/>
            <person name="Wen Y."/>
            <person name="Hou Y."/>
            <person name="Yu J."/>
        </authorList>
    </citation>
    <scope>NUCLEOTIDE SEQUENCE [LARGE SCALE GENOMIC DNA]</scope>
    <source>
        <strain>301 / Serotype 2a</strain>
    </source>
</reference>
<reference key="2">
    <citation type="journal article" date="2003" name="Infect. Immun.">
        <title>Complete genome sequence and comparative genomics of Shigella flexneri serotype 2a strain 2457T.</title>
        <authorList>
            <person name="Wei J."/>
            <person name="Goldberg M.B."/>
            <person name="Burland V."/>
            <person name="Venkatesan M.M."/>
            <person name="Deng W."/>
            <person name="Fournier G."/>
            <person name="Mayhew G.F."/>
            <person name="Plunkett G. III"/>
            <person name="Rose D.J."/>
            <person name="Darling A."/>
            <person name="Mau B."/>
            <person name="Perna N.T."/>
            <person name="Payne S.M."/>
            <person name="Runyen-Janecky L.J."/>
            <person name="Zhou S."/>
            <person name="Schwartz D.C."/>
            <person name="Blattner F.R."/>
        </authorList>
    </citation>
    <scope>NUCLEOTIDE SEQUENCE [LARGE SCALE GENOMIC DNA]</scope>
    <source>
        <strain>ATCC 700930 / 2457T / Serotype 2a</strain>
    </source>
</reference>
<protein>
    <recommendedName>
        <fullName evidence="2">p-hydroxybenzoic acid efflux pump subunit AaeB</fullName>
        <shortName evidence="2">pHBA efflux pump protein B</shortName>
    </recommendedName>
</protein>
<proteinExistence type="inferred from homology"/>
<accession>Q83JE2</accession>
<accession>Q7BZP1</accession>
<gene>
    <name evidence="2" type="primary">aaeB</name>
    <name type="ordered locus">SF3280</name>
    <name type="ordered locus">S3495</name>
</gene>
<comment type="function">
    <text evidence="2">Forms an efflux pump with AaeA. Could function as a metabolic relief valve, allowing to eliminate certain compounds when they accumulate to high levels in the cell.</text>
</comment>
<comment type="subcellular location">
    <subcellularLocation>
        <location evidence="2">Cell inner membrane</location>
        <topology evidence="2">Multi-pass membrane protein</topology>
    </subcellularLocation>
</comment>
<comment type="similarity">
    <text evidence="2">Belongs to the aromatic acid exporter ArAE (TC 2.A.85) family.</text>
</comment>
<name>AAEB_SHIFL</name>